<protein>
    <recommendedName>
        <fullName>Cobrotoxin homolog</fullName>
    </recommendedName>
    <alternativeName>
        <fullName>Short neurotoxin</fullName>
    </alternativeName>
</protein>
<keyword id="KW-0002">3D-structure</keyword>
<keyword id="KW-0008">Acetylcholine receptor inhibiting toxin</keyword>
<keyword id="KW-1015">Disulfide bond</keyword>
<keyword id="KW-0872">Ion channel impairing toxin</keyword>
<keyword id="KW-0528">Neurotoxin</keyword>
<keyword id="KW-0629">Postsynaptic neurotoxin</keyword>
<keyword id="KW-1185">Reference proteome</keyword>
<keyword id="KW-0964">Secreted</keyword>
<keyword id="KW-0732">Signal</keyword>
<keyword id="KW-0800">Toxin</keyword>
<reference key="1">
    <citation type="submission" date="1998-05" db="EMBL/GenBank/DDBJ databases">
        <authorList>
            <person name="Qin C."/>
            <person name="Zhiyong H."/>
        </authorList>
    </citation>
    <scope>NUCLEOTIDE SEQUENCE [MRNA]</scope>
    <source>
        <tissue>Venom gland</tissue>
    </source>
</reference>
<reference key="2">
    <citation type="journal article" date="1993" name="Biochemistry">
        <title>Solution conformation of cobrotoxin: a nuclear magnetic resonance and hybrid distance geometry-dynamical simulated annealing study.</title>
        <authorList>
            <person name="Yu C."/>
            <person name="Bhaskaran R."/>
            <person name="Chuang L.-C."/>
            <person name="Yang C.-C."/>
        </authorList>
    </citation>
    <scope>STRUCTURE BY NMR OF 22-83</scope>
    <scope>DISULFIDE BONDS</scope>
    <scope>SUBCELLULAR LOCATION</scope>
    <source>
        <tissue>Venom</tissue>
    </source>
</reference>
<evidence type="ECO:0000250" key="1"/>
<evidence type="ECO:0000250" key="2">
    <source>
        <dbReference type="UniProtKB" id="P60775"/>
    </source>
</evidence>
<evidence type="ECO:0000269" key="3">
    <source>
    </source>
</evidence>
<evidence type="ECO:0000305" key="4"/>
<evidence type="ECO:0000312" key="5">
    <source>
        <dbReference type="PDB" id="1COD"/>
    </source>
</evidence>
<evidence type="ECO:0007829" key="6">
    <source>
        <dbReference type="PDB" id="1COD"/>
    </source>
</evidence>
<organism>
    <name type="scientific">Naja naja</name>
    <name type="common">Indian cobra</name>
    <dbReference type="NCBI Taxonomy" id="35670"/>
    <lineage>
        <taxon>Eukaryota</taxon>
        <taxon>Metazoa</taxon>
        <taxon>Chordata</taxon>
        <taxon>Craniata</taxon>
        <taxon>Vertebrata</taxon>
        <taxon>Euteleostomi</taxon>
        <taxon>Lepidosauria</taxon>
        <taxon>Squamata</taxon>
        <taxon>Bifurcata</taxon>
        <taxon>Unidentata</taxon>
        <taxon>Episquamata</taxon>
        <taxon>Toxicofera</taxon>
        <taxon>Serpentes</taxon>
        <taxon>Colubroidea</taxon>
        <taxon>Elapidae</taxon>
        <taxon>Elapinae</taxon>
        <taxon>Naja</taxon>
    </lineage>
</organism>
<feature type="signal peptide" evidence="3">
    <location>
        <begin position="1"/>
        <end position="21"/>
    </location>
</feature>
<feature type="chain" id="PRO_0000035455" description="Cobrotoxin homolog" evidence="3">
    <location>
        <begin position="22"/>
        <end position="83"/>
    </location>
</feature>
<feature type="site" description="May be critical for toxicity" evidence="1">
    <location>
        <position position="54"/>
    </location>
</feature>
<feature type="site" description="May be critical for toxicity" evidence="1">
    <location>
        <position position="57"/>
    </location>
</feature>
<feature type="disulfide bond" evidence="3 5">
    <location>
        <begin position="24"/>
        <end position="45"/>
    </location>
</feature>
<feature type="disulfide bond" evidence="3 5">
    <location>
        <begin position="38"/>
        <end position="62"/>
    </location>
</feature>
<feature type="disulfide bond" evidence="3 5">
    <location>
        <begin position="64"/>
        <end position="75"/>
    </location>
</feature>
<feature type="disulfide bond" evidence="3 5">
    <location>
        <begin position="76"/>
        <end position="81"/>
    </location>
</feature>
<feature type="strand" evidence="6">
    <location>
        <begin position="24"/>
        <end position="31"/>
    </location>
</feature>
<feature type="strand" evidence="6">
    <location>
        <begin position="33"/>
        <end position="36"/>
    </location>
</feature>
<feature type="strand" evidence="6">
    <location>
        <begin position="45"/>
        <end position="50"/>
    </location>
</feature>
<feature type="strand" evidence="6">
    <location>
        <begin position="57"/>
        <end position="59"/>
    </location>
</feature>
<feature type="strand" evidence="6">
    <location>
        <begin position="69"/>
        <end position="76"/>
    </location>
</feature>
<feature type="strand" evidence="6">
    <location>
        <begin position="78"/>
        <end position="80"/>
    </location>
</feature>
<name>3S1CB_NAJNA</name>
<proteinExistence type="evidence at protein level"/>
<sequence>METLLLTLLVVTIVCLDLGYTLECHNQQSSQTPTTTGCSGGETNCYKKRWRDHRGYRTERGCGCPSVKNGIEINCCTTDRCNN</sequence>
<accession>Q9PTT0</accession>
<dbReference type="EMBL" id="AF068052">
    <property type="protein sequence ID" value="AAF21774.1"/>
    <property type="molecule type" value="mRNA"/>
</dbReference>
<dbReference type="PDB" id="1COD">
    <property type="method" value="NMR"/>
    <property type="chains" value="A=22-83"/>
</dbReference>
<dbReference type="PDBsum" id="1COD"/>
<dbReference type="BMRB" id="Q9PTT0"/>
<dbReference type="SMR" id="Q9PTT0"/>
<dbReference type="EvolutionaryTrace" id="Q9PTT0"/>
<dbReference type="Proteomes" id="UP000694559">
    <property type="component" value="Unplaced"/>
</dbReference>
<dbReference type="GO" id="GO:0005576">
    <property type="term" value="C:extracellular region"/>
    <property type="evidence" value="ECO:0007669"/>
    <property type="project" value="UniProtKB-SubCell"/>
</dbReference>
<dbReference type="GO" id="GO:0030550">
    <property type="term" value="F:acetylcholine receptor inhibitor activity"/>
    <property type="evidence" value="ECO:0007669"/>
    <property type="project" value="UniProtKB-KW"/>
</dbReference>
<dbReference type="GO" id="GO:0099106">
    <property type="term" value="F:ion channel regulator activity"/>
    <property type="evidence" value="ECO:0007669"/>
    <property type="project" value="UniProtKB-KW"/>
</dbReference>
<dbReference type="GO" id="GO:0090729">
    <property type="term" value="F:toxin activity"/>
    <property type="evidence" value="ECO:0007669"/>
    <property type="project" value="UniProtKB-KW"/>
</dbReference>
<dbReference type="CDD" id="cd00206">
    <property type="entry name" value="TFP_snake_toxin"/>
    <property type="match status" value="1"/>
</dbReference>
<dbReference type="FunFam" id="2.10.60.10:FF:000024">
    <property type="entry name" value="Cytotoxin 1"/>
    <property type="match status" value="1"/>
</dbReference>
<dbReference type="Gene3D" id="2.10.60.10">
    <property type="entry name" value="CD59"/>
    <property type="match status" value="1"/>
</dbReference>
<dbReference type="InterPro" id="IPR003571">
    <property type="entry name" value="Snake_3FTx"/>
</dbReference>
<dbReference type="InterPro" id="IPR045860">
    <property type="entry name" value="Snake_toxin-like_sf"/>
</dbReference>
<dbReference type="InterPro" id="IPR018354">
    <property type="entry name" value="Snake_toxin_con_site"/>
</dbReference>
<dbReference type="InterPro" id="IPR054131">
    <property type="entry name" value="Toxin_cobra-type"/>
</dbReference>
<dbReference type="Pfam" id="PF21947">
    <property type="entry name" value="Toxin_cobra-type"/>
    <property type="match status" value="1"/>
</dbReference>
<dbReference type="SUPFAM" id="SSF57302">
    <property type="entry name" value="Snake toxin-like"/>
    <property type="match status" value="1"/>
</dbReference>
<dbReference type="PROSITE" id="PS00272">
    <property type="entry name" value="SNAKE_TOXIN"/>
    <property type="match status" value="1"/>
</dbReference>
<comment type="function">
    <text evidence="2">Binds to muscle nicotinic acetylcholine receptor (nAChR) and inhibit acetylcholine from binding to the receptor, thereby impairing neuromuscular transmission.</text>
</comment>
<comment type="subcellular location">
    <subcellularLocation>
        <location evidence="3">Secreted</location>
    </subcellularLocation>
</comment>
<comment type="tissue specificity">
    <text evidence="4">Expressed by the venom gland.</text>
</comment>
<comment type="similarity">
    <text evidence="4">Belongs to the three-finger toxin family. Short-chain subfamily. Type I alpha-neurotoxin sub-subfamily.</text>
</comment>